<dbReference type="EMBL" id="AE009439">
    <property type="protein sequence ID" value="AAM02689.1"/>
    <property type="molecule type" value="Genomic_DNA"/>
</dbReference>
<dbReference type="RefSeq" id="WP_011019844.1">
    <property type="nucleotide sequence ID" value="NC_003551.1"/>
</dbReference>
<dbReference type="SMR" id="Q8TVB6"/>
<dbReference type="FunCoup" id="Q8TVB6">
    <property type="interactions" value="145"/>
</dbReference>
<dbReference type="STRING" id="190192.MK1476"/>
<dbReference type="PaxDb" id="190192-MK1476"/>
<dbReference type="EnsemblBacteria" id="AAM02689">
    <property type="protein sequence ID" value="AAM02689"/>
    <property type="gene ID" value="MK1476"/>
</dbReference>
<dbReference type="GeneID" id="1478071"/>
<dbReference type="KEGG" id="mka:MK1476"/>
<dbReference type="HOGENOM" id="CLU_076922_1_0_2"/>
<dbReference type="InParanoid" id="Q8TVB6"/>
<dbReference type="OrthoDB" id="7668at2157"/>
<dbReference type="Proteomes" id="UP000001826">
    <property type="component" value="Chromosome"/>
</dbReference>
<dbReference type="GO" id="GO:0022625">
    <property type="term" value="C:cytosolic large ribosomal subunit"/>
    <property type="evidence" value="ECO:0007669"/>
    <property type="project" value="TreeGrafter"/>
</dbReference>
<dbReference type="GO" id="GO:0003729">
    <property type="term" value="F:mRNA binding"/>
    <property type="evidence" value="ECO:0007669"/>
    <property type="project" value="TreeGrafter"/>
</dbReference>
<dbReference type="GO" id="GO:0003735">
    <property type="term" value="F:structural constituent of ribosome"/>
    <property type="evidence" value="ECO:0007669"/>
    <property type="project" value="InterPro"/>
</dbReference>
<dbReference type="GO" id="GO:0017148">
    <property type="term" value="P:negative regulation of translation"/>
    <property type="evidence" value="ECO:0007669"/>
    <property type="project" value="TreeGrafter"/>
</dbReference>
<dbReference type="GO" id="GO:0006412">
    <property type="term" value="P:translation"/>
    <property type="evidence" value="ECO:0007669"/>
    <property type="project" value="UniProtKB-UniRule"/>
</dbReference>
<dbReference type="CDD" id="cd00392">
    <property type="entry name" value="Ribosomal_L13"/>
    <property type="match status" value="1"/>
</dbReference>
<dbReference type="Gene3D" id="3.90.1180.10">
    <property type="entry name" value="Ribosomal protein L13"/>
    <property type="match status" value="1"/>
</dbReference>
<dbReference type="HAMAP" id="MF_01366">
    <property type="entry name" value="Ribosomal_uL13"/>
    <property type="match status" value="1"/>
</dbReference>
<dbReference type="InterPro" id="IPR005822">
    <property type="entry name" value="Ribosomal_uL13"/>
</dbReference>
<dbReference type="InterPro" id="IPR005823">
    <property type="entry name" value="Ribosomal_uL13_bac-type"/>
</dbReference>
<dbReference type="InterPro" id="IPR023563">
    <property type="entry name" value="Ribosomal_uL13_CS"/>
</dbReference>
<dbReference type="InterPro" id="IPR005755">
    <property type="entry name" value="Ribosomal_uL13_euk/arc"/>
</dbReference>
<dbReference type="InterPro" id="IPR036899">
    <property type="entry name" value="Ribosomal_uL13_sf"/>
</dbReference>
<dbReference type="NCBIfam" id="TIGR01077">
    <property type="entry name" value="L13_A_E"/>
    <property type="match status" value="1"/>
</dbReference>
<dbReference type="NCBIfam" id="NF005004">
    <property type="entry name" value="PRK06394.1"/>
    <property type="match status" value="1"/>
</dbReference>
<dbReference type="PANTHER" id="PTHR11545:SF3">
    <property type="entry name" value="LARGE RIBOSOMAL SUBUNIT PROTEIN UL13"/>
    <property type="match status" value="1"/>
</dbReference>
<dbReference type="PANTHER" id="PTHR11545">
    <property type="entry name" value="RIBOSOMAL PROTEIN L13"/>
    <property type="match status" value="1"/>
</dbReference>
<dbReference type="Pfam" id="PF00572">
    <property type="entry name" value="Ribosomal_L13"/>
    <property type="match status" value="1"/>
</dbReference>
<dbReference type="PIRSF" id="PIRSF002181">
    <property type="entry name" value="Ribosomal_L13"/>
    <property type="match status" value="1"/>
</dbReference>
<dbReference type="SUPFAM" id="SSF52161">
    <property type="entry name" value="Ribosomal protein L13"/>
    <property type="match status" value="1"/>
</dbReference>
<dbReference type="PROSITE" id="PS00783">
    <property type="entry name" value="RIBOSOMAL_L13"/>
    <property type="match status" value="1"/>
</dbReference>
<name>RL13_METKA</name>
<evidence type="ECO:0000255" key="1">
    <source>
        <dbReference type="HAMAP-Rule" id="MF_01366"/>
    </source>
</evidence>
<evidence type="ECO:0000305" key="2"/>
<comment type="function">
    <text evidence="1">This protein is one of the early assembly proteins of the 50S ribosomal subunit, although it is not seen to bind rRNA by itself. It is important during the early stages of 50S assembly.</text>
</comment>
<comment type="subunit">
    <text evidence="1">Part of the 50S ribosomal subunit.</text>
</comment>
<comment type="similarity">
    <text evidence="1">Belongs to the universal ribosomal protein uL13 family.</text>
</comment>
<protein>
    <recommendedName>
        <fullName evidence="1">Large ribosomal subunit protein uL13</fullName>
    </recommendedName>
    <alternativeName>
        <fullName evidence="2">50S ribosomal protein L13</fullName>
    </alternativeName>
</protein>
<keyword id="KW-1185">Reference proteome</keyword>
<keyword id="KW-0687">Ribonucleoprotein</keyword>
<keyword id="KW-0689">Ribosomal protein</keyword>
<sequence>MVEYAHSKPVDPEEWTVIDAENAVLGRLASVVAKRILKGERIAVINTEKAIITGKKNTIKEEWLQKIQRGDPKKGPFYPRRPDLIFRRVVRGMLPWKTKRGREAFKRLRAYIGTPRWVEEANIEPERVAEADMSRLGHLWYVTLGELSEELGYQMPGGQ</sequence>
<proteinExistence type="inferred from homology"/>
<gene>
    <name evidence="1" type="primary">rpl13</name>
    <name type="ordered locus">MK1476</name>
</gene>
<reference key="1">
    <citation type="journal article" date="2002" name="Proc. Natl. Acad. Sci. U.S.A.">
        <title>The complete genome of hyperthermophile Methanopyrus kandleri AV19 and monophyly of archaeal methanogens.</title>
        <authorList>
            <person name="Slesarev A.I."/>
            <person name="Mezhevaya K.V."/>
            <person name="Makarova K.S."/>
            <person name="Polushin N.N."/>
            <person name="Shcherbinina O.V."/>
            <person name="Shakhova V.V."/>
            <person name="Belova G.I."/>
            <person name="Aravind L."/>
            <person name="Natale D.A."/>
            <person name="Rogozin I.B."/>
            <person name="Tatusov R.L."/>
            <person name="Wolf Y.I."/>
            <person name="Stetter K.O."/>
            <person name="Malykh A.G."/>
            <person name="Koonin E.V."/>
            <person name="Kozyavkin S.A."/>
        </authorList>
    </citation>
    <scope>NUCLEOTIDE SEQUENCE [LARGE SCALE GENOMIC DNA]</scope>
    <source>
        <strain>AV19 / DSM 6324 / JCM 9639 / NBRC 100938</strain>
    </source>
</reference>
<feature type="chain" id="PRO_0000261839" description="Large ribosomal subunit protein uL13">
    <location>
        <begin position="1"/>
        <end position="159"/>
    </location>
</feature>
<accession>Q8TVB6</accession>
<organism>
    <name type="scientific">Methanopyrus kandleri (strain AV19 / DSM 6324 / JCM 9639 / NBRC 100938)</name>
    <dbReference type="NCBI Taxonomy" id="190192"/>
    <lineage>
        <taxon>Archaea</taxon>
        <taxon>Methanobacteriati</taxon>
        <taxon>Methanobacteriota</taxon>
        <taxon>Methanomada group</taxon>
        <taxon>Methanopyri</taxon>
        <taxon>Methanopyrales</taxon>
        <taxon>Methanopyraceae</taxon>
        <taxon>Methanopyrus</taxon>
    </lineage>
</organism>